<gene>
    <name evidence="1" type="primary">recA</name>
    <name type="ordered locus">AB57_2307</name>
</gene>
<keyword id="KW-0067">ATP-binding</keyword>
<keyword id="KW-0963">Cytoplasm</keyword>
<keyword id="KW-0227">DNA damage</keyword>
<keyword id="KW-0233">DNA recombination</keyword>
<keyword id="KW-0234">DNA repair</keyword>
<keyword id="KW-0238">DNA-binding</keyword>
<keyword id="KW-0547">Nucleotide-binding</keyword>
<keyword id="KW-0742">SOS response</keyword>
<sequence length="349" mass="37891">MDENKSKALQAALSQIEKQFGKNTVMRLGDNTVQAVEAVSTGSLTLDIALGIGGLPKGRIIEIYGPESSGKTTMTLQAIAQCQKSGGTCAFIDAEHALDPQYARKLGVDIDNLLVSQPDNGEQALEIADMLVRSGAIDLIVVDSVAALTPKAEIEGEMGDSHMGLQARLMSQALRKITGNAKRSNCMVIFINQIRMKIGVMFGSPETTTGGNALKFYASVRLDIRRIGQVKEGDEIVGSETKVKVVKNKMAPPFKEAIFQILYGKGTNQLGELVDLAVQQDIVQKAGAWYSYQGNKIGQGKNNVIRYFEENTQIAEEIERNIREQLLTTGTNGAVQIEDEEEPDLLLES</sequence>
<organism>
    <name type="scientific">Acinetobacter baumannii (strain AB0057)</name>
    <dbReference type="NCBI Taxonomy" id="480119"/>
    <lineage>
        <taxon>Bacteria</taxon>
        <taxon>Pseudomonadati</taxon>
        <taxon>Pseudomonadota</taxon>
        <taxon>Gammaproteobacteria</taxon>
        <taxon>Moraxellales</taxon>
        <taxon>Moraxellaceae</taxon>
        <taxon>Acinetobacter</taxon>
        <taxon>Acinetobacter calcoaceticus/baumannii complex</taxon>
    </lineage>
</organism>
<comment type="function">
    <text evidence="1">Can catalyze the hydrolysis of ATP in the presence of single-stranded DNA, the ATP-dependent uptake of single-stranded DNA by duplex DNA, and the ATP-dependent hybridization of homologous single-stranded DNAs. It interacts with LexA causing its activation and leading to its autocatalytic cleavage.</text>
</comment>
<comment type="subcellular location">
    <subcellularLocation>
        <location evidence="1">Cytoplasm</location>
    </subcellularLocation>
</comment>
<comment type="similarity">
    <text evidence="1">Belongs to the RecA family.</text>
</comment>
<protein>
    <recommendedName>
        <fullName evidence="1">Protein RecA</fullName>
    </recommendedName>
    <alternativeName>
        <fullName evidence="1">Recombinase A</fullName>
    </alternativeName>
</protein>
<proteinExistence type="inferred from homology"/>
<accession>B7I9U0</accession>
<name>RECA_ACIB5</name>
<feature type="chain" id="PRO_1000193282" description="Protein RecA">
    <location>
        <begin position="1"/>
        <end position="349"/>
    </location>
</feature>
<feature type="binding site" evidence="1">
    <location>
        <begin position="65"/>
        <end position="72"/>
    </location>
    <ligand>
        <name>ATP</name>
        <dbReference type="ChEBI" id="CHEBI:30616"/>
    </ligand>
</feature>
<evidence type="ECO:0000255" key="1">
    <source>
        <dbReference type="HAMAP-Rule" id="MF_00268"/>
    </source>
</evidence>
<reference key="1">
    <citation type="journal article" date="2008" name="J. Bacteriol.">
        <title>Comparative genome sequence analysis of multidrug-resistant Acinetobacter baumannii.</title>
        <authorList>
            <person name="Adams M.D."/>
            <person name="Goglin K."/>
            <person name="Molyneaux N."/>
            <person name="Hujer K.M."/>
            <person name="Lavender H."/>
            <person name="Jamison J.J."/>
            <person name="MacDonald I.J."/>
            <person name="Martin K.M."/>
            <person name="Russo T."/>
            <person name="Campagnari A.A."/>
            <person name="Hujer A.M."/>
            <person name="Bonomo R.A."/>
            <person name="Gill S.R."/>
        </authorList>
    </citation>
    <scope>NUCLEOTIDE SEQUENCE [LARGE SCALE GENOMIC DNA]</scope>
    <source>
        <strain>AB0057</strain>
    </source>
</reference>
<dbReference type="EMBL" id="CP001182">
    <property type="protein sequence ID" value="ACJ42423.1"/>
    <property type="molecule type" value="Genomic_DNA"/>
</dbReference>
<dbReference type="RefSeq" id="WP_000344169.1">
    <property type="nucleotide sequence ID" value="NC_011586.2"/>
</dbReference>
<dbReference type="SMR" id="B7I9U0"/>
<dbReference type="GeneID" id="92894223"/>
<dbReference type="KEGG" id="abn:AB57_06505"/>
<dbReference type="HOGENOM" id="CLU_040469_3_2_6"/>
<dbReference type="Proteomes" id="UP000007094">
    <property type="component" value="Chromosome"/>
</dbReference>
<dbReference type="GO" id="GO:0005829">
    <property type="term" value="C:cytosol"/>
    <property type="evidence" value="ECO:0007669"/>
    <property type="project" value="TreeGrafter"/>
</dbReference>
<dbReference type="GO" id="GO:0005524">
    <property type="term" value="F:ATP binding"/>
    <property type="evidence" value="ECO:0007669"/>
    <property type="project" value="UniProtKB-UniRule"/>
</dbReference>
<dbReference type="GO" id="GO:0016887">
    <property type="term" value="F:ATP hydrolysis activity"/>
    <property type="evidence" value="ECO:0007669"/>
    <property type="project" value="InterPro"/>
</dbReference>
<dbReference type="GO" id="GO:0140664">
    <property type="term" value="F:ATP-dependent DNA damage sensor activity"/>
    <property type="evidence" value="ECO:0007669"/>
    <property type="project" value="InterPro"/>
</dbReference>
<dbReference type="GO" id="GO:0003684">
    <property type="term" value="F:damaged DNA binding"/>
    <property type="evidence" value="ECO:0007669"/>
    <property type="project" value="UniProtKB-UniRule"/>
</dbReference>
<dbReference type="GO" id="GO:0003697">
    <property type="term" value="F:single-stranded DNA binding"/>
    <property type="evidence" value="ECO:0007669"/>
    <property type="project" value="UniProtKB-UniRule"/>
</dbReference>
<dbReference type="GO" id="GO:0006310">
    <property type="term" value="P:DNA recombination"/>
    <property type="evidence" value="ECO:0007669"/>
    <property type="project" value="UniProtKB-UniRule"/>
</dbReference>
<dbReference type="GO" id="GO:0006281">
    <property type="term" value="P:DNA repair"/>
    <property type="evidence" value="ECO:0007669"/>
    <property type="project" value="UniProtKB-UniRule"/>
</dbReference>
<dbReference type="GO" id="GO:0009432">
    <property type="term" value="P:SOS response"/>
    <property type="evidence" value="ECO:0007669"/>
    <property type="project" value="UniProtKB-UniRule"/>
</dbReference>
<dbReference type="CDD" id="cd00983">
    <property type="entry name" value="RecA"/>
    <property type="match status" value="1"/>
</dbReference>
<dbReference type="FunFam" id="3.40.50.300:FF:000087">
    <property type="entry name" value="Recombinase RecA"/>
    <property type="match status" value="1"/>
</dbReference>
<dbReference type="Gene3D" id="3.40.50.300">
    <property type="entry name" value="P-loop containing nucleotide triphosphate hydrolases"/>
    <property type="match status" value="1"/>
</dbReference>
<dbReference type="HAMAP" id="MF_00268">
    <property type="entry name" value="RecA"/>
    <property type="match status" value="1"/>
</dbReference>
<dbReference type="InterPro" id="IPR003593">
    <property type="entry name" value="AAA+_ATPase"/>
</dbReference>
<dbReference type="InterPro" id="IPR013765">
    <property type="entry name" value="DNA_recomb/repair_RecA"/>
</dbReference>
<dbReference type="InterPro" id="IPR020584">
    <property type="entry name" value="DNA_recomb/repair_RecA_CS"/>
</dbReference>
<dbReference type="InterPro" id="IPR027417">
    <property type="entry name" value="P-loop_NTPase"/>
</dbReference>
<dbReference type="InterPro" id="IPR049261">
    <property type="entry name" value="RecA-like_C"/>
</dbReference>
<dbReference type="InterPro" id="IPR049428">
    <property type="entry name" value="RecA-like_N"/>
</dbReference>
<dbReference type="InterPro" id="IPR020588">
    <property type="entry name" value="RecA_ATP-bd"/>
</dbReference>
<dbReference type="InterPro" id="IPR023400">
    <property type="entry name" value="RecA_C_sf"/>
</dbReference>
<dbReference type="InterPro" id="IPR020587">
    <property type="entry name" value="RecA_monomer-monomer_interface"/>
</dbReference>
<dbReference type="NCBIfam" id="TIGR02012">
    <property type="entry name" value="tigrfam_recA"/>
    <property type="match status" value="1"/>
</dbReference>
<dbReference type="PANTHER" id="PTHR45900:SF1">
    <property type="entry name" value="MITOCHONDRIAL DNA REPAIR PROTEIN RECA HOMOLOG-RELATED"/>
    <property type="match status" value="1"/>
</dbReference>
<dbReference type="PANTHER" id="PTHR45900">
    <property type="entry name" value="RECA"/>
    <property type="match status" value="1"/>
</dbReference>
<dbReference type="Pfam" id="PF00154">
    <property type="entry name" value="RecA"/>
    <property type="match status" value="1"/>
</dbReference>
<dbReference type="Pfam" id="PF21096">
    <property type="entry name" value="RecA_C"/>
    <property type="match status" value="1"/>
</dbReference>
<dbReference type="PRINTS" id="PR00142">
    <property type="entry name" value="RECA"/>
</dbReference>
<dbReference type="SMART" id="SM00382">
    <property type="entry name" value="AAA"/>
    <property type="match status" value="1"/>
</dbReference>
<dbReference type="SUPFAM" id="SSF52540">
    <property type="entry name" value="P-loop containing nucleoside triphosphate hydrolases"/>
    <property type="match status" value="1"/>
</dbReference>
<dbReference type="SUPFAM" id="SSF54752">
    <property type="entry name" value="RecA protein, C-terminal domain"/>
    <property type="match status" value="1"/>
</dbReference>
<dbReference type="PROSITE" id="PS00321">
    <property type="entry name" value="RECA_1"/>
    <property type="match status" value="1"/>
</dbReference>
<dbReference type="PROSITE" id="PS50162">
    <property type="entry name" value="RECA_2"/>
    <property type="match status" value="1"/>
</dbReference>
<dbReference type="PROSITE" id="PS50163">
    <property type="entry name" value="RECA_3"/>
    <property type="match status" value="1"/>
</dbReference>